<comment type="function">
    <text evidence="1 5">PPIases accelerate the folding of proteins. It catalyzes the cis-trans isomerization of proline imidic peptide bonds in oligopeptides (By similarity). Involved in the accumulation of the PSII complex.</text>
</comment>
<comment type="catalytic activity">
    <reaction evidence="9">
        <text>[protein]-peptidylproline (omega=180) = [protein]-peptidylproline (omega=0)</text>
        <dbReference type="Rhea" id="RHEA:16237"/>
        <dbReference type="Rhea" id="RHEA-COMP:10747"/>
        <dbReference type="Rhea" id="RHEA-COMP:10748"/>
        <dbReference type="ChEBI" id="CHEBI:83833"/>
        <dbReference type="ChEBI" id="CHEBI:83834"/>
        <dbReference type="EC" id="5.2.1.8"/>
    </reaction>
</comment>
<comment type="subunit">
    <text evidence="7">Interacts in vitro with LTO1.</text>
</comment>
<comment type="subcellular location">
    <subcellularLocation>
        <location evidence="4 6">Plastid</location>
        <location evidence="4 6">Chloroplast thylakoid lumen</location>
    </subcellularLocation>
</comment>
<comment type="miscellaneous">
    <text>PPIase activity is unaffected on reduction.</text>
</comment>
<comment type="similarity">
    <text evidence="9">Belongs to the FKBP-type PPIase family.</text>
</comment>
<comment type="sequence caution" evidence="9">
    <conflict type="erroneous gene model prediction">
        <sequence resource="EMBL-CDS" id="CAB81823"/>
    </conflict>
</comment>
<accession>Q0WRJ7</accession>
<accession>Q9M222</accession>
<evidence type="ECO:0000250" key="1"/>
<evidence type="ECO:0000255" key="2"/>
<evidence type="ECO:0000255" key="3">
    <source>
        <dbReference type="PROSITE-ProRule" id="PRU00277"/>
    </source>
</evidence>
<evidence type="ECO:0000269" key="4">
    <source>
    </source>
</evidence>
<evidence type="ECO:0000269" key="5">
    <source>
    </source>
</evidence>
<evidence type="ECO:0000269" key="6">
    <source>
    </source>
</evidence>
<evidence type="ECO:0000269" key="7">
    <source>
    </source>
</evidence>
<evidence type="ECO:0000303" key="8">
    <source>
    </source>
</evidence>
<evidence type="ECO:0000305" key="9"/>
<evidence type="ECO:0000312" key="10">
    <source>
        <dbReference type="Araport" id="AT3G60370"/>
    </source>
</evidence>
<evidence type="ECO:0000312" key="11">
    <source>
        <dbReference type="EMBL" id="CAB81823.1"/>
    </source>
</evidence>
<gene>
    <name evidence="8" type="primary">FKBP20-2</name>
    <name evidence="10" type="ordered locus">At3g60370</name>
    <name evidence="11" type="ORF">T8B10.30</name>
</gene>
<protein>
    <recommendedName>
        <fullName evidence="8">Peptidyl-prolyl cis-trans isomerase FKBP20-2, chloroplastic</fullName>
        <shortName evidence="8">PPIase FKBP20-2</shortName>
        <ecNumber evidence="9">5.2.1.8</ecNumber>
    </recommendedName>
    <alternativeName>
        <fullName evidence="8">FK506-binding protein 20-2</fullName>
        <shortName evidence="8">AtFKBP20-2</shortName>
    </alternativeName>
    <alternativeName>
        <fullName evidence="8">Immunophilin FKBP20-2</fullName>
    </alternativeName>
    <alternativeName>
        <fullName>Rotamase</fullName>
    </alternativeName>
</protein>
<name>FK202_ARATH</name>
<organism>
    <name type="scientific">Arabidopsis thaliana</name>
    <name type="common">Mouse-ear cress</name>
    <dbReference type="NCBI Taxonomy" id="3702"/>
    <lineage>
        <taxon>Eukaryota</taxon>
        <taxon>Viridiplantae</taxon>
        <taxon>Streptophyta</taxon>
        <taxon>Embryophyta</taxon>
        <taxon>Tracheophyta</taxon>
        <taxon>Spermatophyta</taxon>
        <taxon>Magnoliopsida</taxon>
        <taxon>eudicotyledons</taxon>
        <taxon>Gunneridae</taxon>
        <taxon>Pentapetalae</taxon>
        <taxon>rosids</taxon>
        <taxon>malvids</taxon>
        <taxon>Brassicales</taxon>
        <taxon>Brassicaceae</taxon>
        <taxon>Camelineae</taxon>
        <taxon>Arabidopsis</taxon>
    </lineage>
</organism>
<keyword id="KW-0150">Chloroplast</keyword>
<keyword id="KW-0903">Direct protein sequencing</keyword>
<keyword id="KW-1015">Disulfide bond</keyword>
<keyword id="KW-0413">Isomerase</keyword>
<keyword id="KW-0934">Plastid</keyword>
<keyword id="KW-1185">Reference proteome</keyword>
<keyword id="KW-0697">Rotamase</keyword>
<keyword id="KW-0793">Thylakoid</keyword>
<keyword id="KW-0809">Transit peptide</keyword>
<feature type="transit peptide" description="Chloroplast" evidence="2">
    <location>
        <begin position="1"/>
        <end position="31"/>
    </location>
</feature>
<feature type="transit peptide" description="Thylakoid" evidence="4">
    <location>
        <begin position="32"/>
        <end position="67"/>
    </location>
</feature>
<feature type="chain" id="PRO_0000342097" description="Peptidyl-prolyl cis-trans isomerase FKBP20-2, chloroplastic">
    <location>
        <begin position="68"/>
        <end position="242"/>
    </location>
</feature>
<feature type="domain" description="PPIase FKBP-type" evidence="3">
    <location>
        <begin position="138"/>
        <end position="225"/>
    </location>
</feature>
<feature type="disulfide bond">
    <location>
        <begin position="227"/>
        <end position="241"/>
    </location>
</feature>
<feature type="mutagenesis site" description="50% reduction of activity; when associated with S-241." evidence="5">
    <original>C</original>
    <variation>S</variation>
    <location>
        <position position="227"/>
    </location>
</feature>
<feature type="mutagenesis site" description="50% reduction of activity; when associated with S-227." evidence="5">
    <original>C</original>
    <variation>S</variation>
    <location>
        <position position="241"/>
    </location>
</feature>
<sequence>MVTILSTPLSPRLTFLCETKLSLSRSNRSVCCSLSEEPKDQCLSRRSLVYVLVASPCLLLPALSSSAKTKSKSPYDERRLLEQNKRIQRENNAPDEFPNFVREGFEVKVLASDNYIKADSGLIYRDFNVGQGDFPKDGQQVTFHYIGYNESGRRIDSTYIQGSPARIRMGTNALVPGFEMGIRDMKPGGRRRIIIPPELGPPVGPSTFFSSKQFEVFDVELLSIQNCERRTIIGFYSDVTCS</sequence>
<proteinExistence type="evidence at protein level"/>
<reference key="1">
    <citation type="journal article" date="2000" name="Nature">
        <title>Sequence and analysis of chromosome 3 of the plant Arabidopsis thaliana.</title>
        <authorList>
            <person name="Salanoubat M."/>
            <person name="Lemcke K."/>
            <person name="Rieger M."/>
            <person name="Ansorge W."/>
            <person name="Unseld M."/>
            <person name="Fartmann B."/>
            <person name="Valle G."/>
            <person name="Bloecker H."/>
            <person name="Perez-Alonso M."/>
            <person name="Obermaier B."/>
            <person name="Delseny M."/>
            <person name="Boutry M."/>
            <person name="Grivell L.A."/>
            <person name="Mache R."/>
            <person name="Puigdomenech P."/>
            <person name="De Simone V."/>
            <person name="Choisne N."/>
            <person name="Artiguenave F."/>
            <person name="Robert C."/>
            <person name="Brottier P."/>
            <person name="Wincker P."/>
            <person name="Cattolico L."/>
            <person name="Weissenbach J."/>
            <person name="Saurin W."/>
            <person name="Quetier F."/>
            <person name="Schaefer M."/>
            <person name="Mueller-Auer S."/>
            <person name="Gabel C."/>
            <person name="Fuchs M."/>
            <person name="Benes V."/>
            <person name="Wurmbach E."/>
            <person name="Drzonek H."/>
            <person name="Erfle H."/>
            <person name="Jordan N."/>
            <person name="Bangert S."/>
            <person name="Wiedelmann R."/>
            <person name="Kranz H."/>
            <person name="Voss H."/>
            <person name="Holland R."/>
            <person name="Brandt P."/>
            <person name="Nyakatura G."/>
            <person name="Vezzi A."/>
            <person name="D'Angelo M."/>
            <person name="Pallavicini A."/>
            <person name="Toppo S."/>
            <person name="Simionati B."/>
            <person name="Conrad A."/>
            <person name="Hornischer K."/>
            <person name="Kauer G."/>
            <person name="Loehnert T.-H."/>
            <person name="Nordsiek G."/>
            <person name="Reichelt J."/>
            <person name="Scharfe M."/>
            <person name="Schoen O."/>
            <person name="Bargues M."/>
            <person name="Terol J."/>
            <person name="Climent J."/>
            <person name="Navarro P."/>
            <person name="Collado C."/>
            <person name="Perez-Perez A."/>
            <person name="Ottenwaelder B."/>
            <person name="Duchemin D."/>
            <person name="Cooke R."/>
            <person name="Laudie M."/>
            <person name="Berger-Llauro C."/>
            <person name="Purnelle B."/>
            <person name="Masuy D."/>
            <person name="de Haan M."/>
            <person name="Maarse A.C."/>
            <person name="Alcaraz J.-P."/>
            <person name="Cottet A."/>
            <person name="Casacuberta E."/>
            <person name="Monfort A."/>
            <person name="Argiriou A."/>
            <person name="Flores M."/>
            <person name="Liguori R."/>
            <person name="Vitale D."/>
            <person name="Mannhaupt G."/>
            <person name="Haase D."/>
            <person name="Schoof H."/>
            <person name="Rudd S."/>
            <person name="Zaccaria P."/>
            <person name="Mewes H.-W."/>
            <person name="Mayer K.F.X."/>
            <person name="Kaul S."/>
            <person name="Town C.D."/>
            <person name="Koo H.L."/>
            <person name="Tallon L.J."/>
            <person name="Jenkins J."/>
            <person name="Rooney T."/>
            <person name="Rizzo M."/>
            <person name="Walts A."/>
            <person name="Utterback T."/>
            <person name="Fujii C.Y."/>
            <person name="Shea T.P."/>
            <person name="Creasy T.H."/>
            <person name="Haas B."/>
            <person name="Maiti R."/>
            <person name="Wu D."/>
            <person name="Peterson J."/>
            <person name="Van Aken S."/>
            <person name="Pai G."/>
            <person name="Militscher J."/>
            <person name="Sellers P."/>
            <person name="Gill J.E."/>
            <person name="Feldblyum T.V."/>
            <person name="Preuss D."/>
            <person name="Lin X."/>
            <person name="Nierman W.C."/>
            <person name="Salzberg S.L."/>
            <person name="White O."/>
            <person name="Venter J.C."/>
            <person name="Fraser C.M."/>
            <person name="Kaneko T."/>
            <person name="Nakamura Y."/>
            <person name="Sato S."/>
            <person name="Kato T."/>
            <person name="Asamizu E."/>
            <person name="Sasamoto S."/>
            <person name="Kimura T."/>
            <person name="Idesawa K."/>
            <person name="Kawashima K."/>
            <person name="Kishida Y."/>
            <person name="Kiyokawa C."/>
            <person name="Kohara M."/>
            <person name="Matsumoto M."/>
            <person name="Matsuno A."/>
            <person name="Muraki A."/>
            <person name="Nakayama S."/>
            <person name="Nakazaki N."/>
            <person name="Shinpo S."/>
            <person name="Takeuchi C."/>
            <person name="Wada T."/>
            <person name="Watanabe A."/>
            <person name="Yamada M."/>
            <person name="Yasuda M."/>
            <person name="Tabata S."/>
        </authorList>
    </citation>
    <scope>NUCLEOTIDE SEQUENCE [LARGE SCALE GENOMIC DNA]</scope>
    <source>
        <strain>cv. Columbia</strain>
    </source>
</reference>
<reference key="2">
    <citation type="journal article" date="2017" name="Plant J.">
        <title>Araport11: a complete reannotation of the Arabidopsis thaliana reference genome.</title>
        <authorList>
            <person name="Cheng C.Y."/>
            <person name="Krishnakumar V."/>
            <person name="Chan A.P."/>
            <person name="Thibaud-Nissen F."/>
            <person name="Schobel S."/>
            <person name="Town C.D."/>
        </authorList>
    </citation>
    <scope>GENOME REANNOTATION</scope>
    <source>
        <strain>cv. Columbia</strain>
    </source>
</reference>
<reference key="3">
    <citation type="submission" date="2006-07" db="EMBL/GenBank/DDBJ databases">
        <title>Large-scale analysis of RIKEN Arabidopsis full-length (RAFL) cDNAs.</title>
        <authorList>
            <person name="Totoki Y."/>
            <person name="Seki M."/>
            <person name="Ishida J."/>
            <person name="Nakajima M."/>
            <person name="Enju A."/>
            <person name="Kamiya A."/>
            <person name="Narusaka M."/>
            <person name="Shin-i T."/>
            <person name="Nakagawa M."/>
            <person name="Sakamoto N."/>
            <person name="Oishi K."/>
            <person name="Kohara Y."/>
            <person name="Kobayashi M."/>
            <person name="Toyoda A."/>
            <person name="Sakaki Y."/>
            <person name="Sakurai T."/>
            <person name="Iida K."/>
            <person name="Akiyama K."/>
            <person name="Satou M."/>
            <person name="Toyoda T."/>
            <person name="Konagaya A."/>
            <person name="Carninci P."/>
            <person name="Kawai J."/>
            <person name="Hayashizaki Y."/>
            <person name="Shinozaki K."/>
        </authorList>
    </citation>
    <scope>NUCLEOTIDE SEQUENCE [LARGE SCALE MRNA]</scope>
    <source>
        <strain>cv. Columbia</strain>
    </source>
</reference>
<reference key="4">
    <citation type="submission" date="2006-12" db="EMBL/GenBank/DDBJ databases">
        <title>Arabidopsis ORF clones.</title>
        <authorList>
            <person name="Bautista V.R."/>
            <person name="Kim C.J."/>
            <person name="Chen H."/>
            <person name="Quinitio C."/>
            <person name="Ecker J.R."/>
        </authorList>
    </citation>
    <scope>NUCLEOTIDE SEQUENCE [LARGE SCALE MRNA]</scope>
    <source>
        <strain>cv. Columbia</strain>
    </source>
</reference>
<reference key="5">
    <citation type="journal article" date="2002" name="J. Biol. Chem.">
        <title>Proteome map of the chloroplast lumen of Arabidopsis thaliana.</title>
        <authorList>
            <person name="Schubert M."/>
            <person name="Petersson U.A."/>
            <person name="Haas B.J."/>
            <person name="Funk C."/>
            <person name="Schroeder W.P."/>
            <person name="Kieselbach T."/>
        </authorList>
    </citation>
    <scope>PROTEIN SEQUENCE OF 68-84</scope>
    <scope>SUBCELLULAR LOCATION</scope>
</reference>
<reference key="6">
    <citation type="journal article" date="2002" name="Plant Cell">
        <title>Central functions of the lumenal and peripheral thylakoid proteome of Arabidopsis determined by experimentation and genome-wide prediction.</title>
        <authorList>
            <person name="Peltier J.-B."/>
            <person name="Emanuelsson O."/>
            <person name="Kalume D.E."/>
            <person name="Ytterberg J."/>
            <person name="Friso G."/>
            <person name="Rudella A."/>
            <person name="Liberles D.A."/>
            <person name="Soederberg L."/>
            <person name="Roepstorff P."/>
            <person name="von Heijne G."/>
            <person name="van Wijk K.J."/>
        </authorList>
    </citation>
    <scope>IDENTIFICATION BY MASS SPECTROMETRY</scope>
</reference>
<reference key="7">
    <citation type="journal article" date="2004" name="Plant Physiol.">
        <title>Immunophilins and parvulins. Superfamily of peptidyl prolyl isomerases in Arabidopsis.</title>
        <authorList>
            <person name="He Z."/>
            <person name="Li L."/>
            <person name="Luan S."/>
        </authorList>
    </citation>
    <scope>GENE FAMILY</scope>
    <scope>NOMENCLATURE</scope>
</reference>
<reference key="8">
    <citation type="journal article" date="2006" name="Proc. Natl. Acad. Sci. U.S.A.">
        <title>A redox-active FKBP-type immunophilin functions in accumulation of the photosystem II supercomplex in Arabidopsis thaliana.</title>
        <authorList>
            <person name="Lima A."/>
            <person name="Lima S."/>
            <person name="Wong J.H."/>
            <person name="Phillips R.S."/>
            <person name="Buchanan B.B."/>
            <person name="Luan S."/>
        </authorList>
    </citation>
    <scope>FUNCTION</scope>
    <scope>MUTAGENESIS OF CYS-227 AND CYS-241</scope>
</reference>
<reference key="9">
    <citation type="journal article" date="2008" name="PLoS ONE">
        <title>Sorting signals, N-terminal modifications and abundance of the chloroplast proteome.</title>
        <authorList>
            <person name="Zybailov B."/>
            <person name="Rutschow H."/>
            <person name="Friso G."/>
            <person name="Rudella A."/>
            <person name="Emanuelsson O."/>
            <person name="Sun Q."/>
            <person name="van Wijk K.J."/>
        </authorList>
    </citation>
    <scope>IDENTIFICATION BY MASS SPECTROMETRY</scope>
    <scope>SUBCELLULAR LOCATION [LARGE SCALE ANALYSIS]</scope>
</reference>
<reference key="10">
    <citation type="journal article" date="2014" name="Protein Pept. Lett.">
        <title>Identification of potential targets for thylakoid oxidoreductase AtVKOR/LTO1 in chloroplasts.</title>
        <authorList>
            <person name="Lu Y."/>
            <person name="Du J.J."/>
            <person name="Yu Z.B."/>
            <person name="Peng J.J."/>
            <person name="Xu J.N."/>
            <person name="Wang X.Y."/>
        </authorList>
    </citation>
    <scope>INTERACTION WITH LTO1</scope>
</reference>
<dbReference type="EC" id="5.2.1.8" evidence="9"/>
<dbReference type="EMBL" id="AL138646">
    <property type="protein sequence ID" value="CAB81823.1"/>
    <property type="status" value="ALT_SEQ"/>
    <property type="molecule type" value="Genomic_DNA"/>
</dbReference>
<dbReference type="EMBL" id="CP002686">
    <property type="protein sequence ID" value="AEE80052.1"/>
    <property type="molecule type" value="Genomic_DNA"/>
</dbReference>
<dbReference type="EMBL" id="BT029531">
    <property type="protein sequence ID" value="ABL66787.1"/>
    <property type="molecule type" value="mRNA"/>
</dbReference>
<dbReference type="EMBL" id="AK228309">
    <property type="protein sequence ID" value="BAF00252.1"/>
    <property type="molecule type" value="mRNA"/>
</dbReference>
<dbReference type="PIR" id="T47848">
    <property type="entry name" value="T47848"/>
</dbReference>
<dbReference type="RefSeq" id="NP_567098.2">
    <property type="nucleotide sequence ID" value="NM_115901.4"/>
</dbReference>
<dbReference type="SMR" id="Q0WRJ7"/>
<dbReference type="BioGRID" id="10522">
    <property type="interactions" value="1"/>
</dbReference>
<dbReference type="FunCoup" id="Q0WRJ7">
    <property type="interactions" value="955"/>
</dbReference>
<dbReference type="IntAct" id="Q0WRJ7">
    <property type="interactions" value="1"/>
</dbReference>
<dbReference type="STRING" id="3702.Q0WRJ7"/>
<dbReference type="iPTMnet" id="Q0WRJ7"/>
<dbReference type="PaxDb" id="3702-AT3G60370.1"/>
<dbReference type="ProteomicsDB" id="230513"/>
<dbReference type="EnsemblPlants" id="AT3G60370.1">
    <property type="protein sequence ID" value="AT3G60370.1"/>
    <property type="gene ID" value="AT3G60370"/>
</dbReference>
<dbReference type="GeneID" id="825208"/>
<dbReference type="Gramene" id="AT3G60370.1">
    <property type="protein sequence ID" value="AT3G60370.1"/>
    <property type="gene ID" value="AT3G60370"/>
</dbReference>
<dbReference type="KEGG" id="ath:AT3G60370"/>
<dbReference type="Araport" id="AT3G60370"/>
<dbReference type="TAIR" id="AT3G60370"/>
<dbReference type="eggNOG" id="ENOG502QVUR">
    <property type="taxonomic scope" value="Eukaryota"/>
</dbReference>
<dbReference type="HOGENOM" id="CLU_083172_0_1_1"/>
<dbReference type="InParanoid" id="Q0WRJ7"/>
<dbReference type="PhylomeDB" id="Q0WRJ7"/>
<dbReference type="PRO" id="PR:Q0WRJ7"/>
<dbReference type="Proteomes" id="UP000006548">
    <property type="component" value="Chromosome 3"/>
</dbReference>
<dbReference type="ExpressionAtlas" id="Q0WRJ7">
    <property type="expression patterns" value="baseline and differential"/>
</dbReference>
<dbReference type="GO" id="GO:0009507">
    <property type="term" value="C:chloroplast"/>
    <property type="evidence" value="ECO:0007005"/>
    <property type="project" value="TAIR"/>
</dbReference>
<dbReference type="GO" id="GO:0009543">
    <property type="term" value="C:chloroplast thylakoid lumen"/>
    <property type="evidence" value="ECO:0007669"/>
    <property type="project" value="UniProtKB-SubCell"/>
</dbReference>
<dbReference type="GO" id="GO:0009579">
    <property type="term" value="C:thylakoid"/>
    <property type="evidence" value="ECO:0007005"/>
    <property type="project" value="TAIR"/>
</dbReference>
<dbReference type="GO" id="GO:0031977">
    <property type="term" value="C:thylakoid lumen"/>
    <property type="evidence" value="ECO:0007005"/>
    <property type="project" value="TAIR"/>
</dbReference>
<dbReference type="GO" id="GO:0016491">
    <property type="term" value="F:oxidoreductase activity"/>
    <property type="evidence" value="ECO:0000314"/>
    <property type="project" value="TAIR"/>
</dbReference>
<dbReference type="GO" id="GO:0003755">
    <property type="term" value="F:peptidyl-prolyl cis-trans isomerase activity"/>
    <property type="evidence" value="ECO:0000314"/>
    <property type="project" value="TAIR"/>
</dbReference>
<dbReference type="GO" id="GO:0010207">
    <property type="term" value="P:photosystem II assembly"/>
    <property type="evidence" value="ECO:0000315"/>
    <property type="project" value="TAIR"/>
</dbReference>
<dbReference type="Gene3D" id="3.10.50.40">
    <property type="match status" value="1"/>
</dbReference>
<dbReference type="InterPro" id="IPR044239">
    <property type="entry name" value="FKBP20-2-like"/>
</dbReference>
<dbReference type="InterPro" id="IPR046357">
    <property type="entry name" value="PPIase_dom_sf"/>
</dbReference>
<dbReference type="InterPro" id="IPR001179">
    <property type="entry name" value="PPIase_FKBP_dom"/>
</dbReference>
<dbReference type="PANTHER" id="PTHR47414">
    <property type="entry name" value="PEPTIDYL-PROLYL CIS-TRANS ISOMERASE FKBP20-2, CHLOROPLASTIC"/>
    <property type="match status" value="1"/>
</dbReference>
<dbReference type="PANTHER" id="PTHR47414:SF1">
    <property type="entry name" value="PEPTIDYL-PROLYL CIS-TRANS ISOMERASE FKBP20-2, CHLOROPLASTIC"/>
    <property type="match status" value="1"/>
</dbReference>
<dbReference type="Pfam" id="PF00254">
    <property type="entry name" value="FKBP_C"/>
    <property type="match status" value="1"/>
</dbReference>
<dbReference type="SUPFAM" id="SSF54534">
    <property type="entry name" value="FKBP-like"/>
    <property type="match status" value="1"/>
</dbReference>
<dbReference type="PROSITE" id="PS50059">
    <property type="entry name" value="FKBP_PPIASE"/>
    <property type="match status" value="1"/>
</dbReference>